<reference evidence="8" key="1">
    <citation type="submission" date="2004-01" db="EMBL/GenBank/DDBJ databases">
        <title>Rat Rec8 mRNA full sequence.</title>
        <authorList>
            <person name="Ben-Ari V."/>
            <person name="Dekel N."/>
        </authorList>
    </citation>
    <scope>NUCLEOTIDE SEQUENCE [MRNA]</scope>
    <source>
        <strain evidence="8">Wistar</strain>
    </source>
</reference>
<reference evidence="7" key="2">
    <citation type="journal article" date="2004" name="Genome Res.">
        <title>The status, quality, and expansion of the NIH full-length cDNA project: the Mammalian Gene Collection (MGC).</title>
        <authorList>
            <consortium name="The MGC Project Team"/>
        </authorList>
    </citation>
    <scope>NUCLEOTIDE SEQUENCE [LARGE SCALE MRNA]</scope>
    <source>
        <strain evidence="7">Brown Norway</strain>
        <tissue evidence="7">Testis</tissue>
    </source>
</reference>
<reference evidence="6" key="3">
    <citation type="journal article" date="2003" name="J. Cell Biol.">
        <title>Meiotic cohesin REC8 marks the axial elements of rat synaptonemal complexes before cohesins SMC1beta and SMC3.</title>
        <authorList>
            <person name="Eijpe M."/>
            <person name="Offenberg H."/>
            <person name="Jessberger R."/>
            <person name="Revenkova E."/>
            <person name="Heyting C."/>
        </authorList>
    </citation>
    <scope>INTERACTION WITH RAD51</scope>
    <scope>SUBCELLULAR LOCATION</scope>
    <scope>PHOSPHORYLATION</scope>
</reference>
<reference key="4">
    <citation type="journal article" date="2012" name="Nat. Commun.">
        <title>Quantitative maps of protein phosphorylation sites across 14 different rat organs and tissues.</title>
        <authorList>
            <person name="Lundby A."/>
            <person name="Secher A."/>
            <person name="Lage K."/>
            <person name="Nordsborg N.B."/>
            <person name="Dmytriyev A."/>
            <person name="Lundby C."/>
            <person name="Olsen J.V."/>
        </authorList>
    </citation>
    <scope>PHOSPHORYLATION [LARGE SCALE ANALYSIS] AT THR-164 AND SER-192</scope>
    <scope>IDENTIFICATION BY MASS SPECTROMETRY [LARGE SCALE ANALYSIS]</scope>
</reference>
<keyword id="KW-0137">Centromere</keyword>
<keyword id="KW-0158">Chromosome</keyword>
<keyword id="KW-0159">Chromosome partition</keyword>
<keyword id="KW-0469">Meiosis</keyword>
<keyword id="KW-0539">Nucleus</keyword>
<keyword id="KW-0597">Phosphoprotein</keyword>
<keyword id="KW-1185">Reference proteome</keyword>
<name>REC8_RAT</name>
<protein>
    <recommendedName>
        <fullName>Meiotic recombination protein REC8 homolog</fullName>
    </recommendedName>
    <alternativeName>
        <fullName>Cohesin Rec8p</fullName>
    </alternativeName>
</protein>
<evidence type="ECO:0000250" key="1"/>
<evidence type="ECO:0000250" key="2">
    <source>
        <dbReference type="UniProtKB" id="Q8C5S7"/>
    </source>
</evidence>
<evidence type="ECO:0000255" key="3"/>
<evidence type="ECO:0000256" key="4">
    <source>
        <dbReference type="SAM" id="MobiDB-lite"/>
    </source>
</evidence>
<evidence type="ECO:0000269" key="5">
    <source>
    </source>
</evidence>
<evidence type="ECO:0000305" key="6"/>
<evidence type="ECO:0000312" key="7">
    <source>
        <dbReference type="EMBL" id="AAH79023.1"/>
    </source>
</evidence>
<evidence type="ECO:0000312" key="8">
    <source>
        <dbReference type="EMBL" id="AAS20426.1"/>
    </source>
</evidence>
<evidence type="ECO:0007744" key="9">
    <source>
    </source>
</evidence>
<dbReference type="EMBL" id="AY529701">
    <property type="protein sequence ID" value="AAS20426.1"/>
    <property type="molecule type" value="mRNA"/>
</dbReference>
<dbReference type="EMBL" id="BC079023">
    <property type="protein sequence ID" value="AAH79023.1"/>
    <property type="molecule type" value="mRNA"/>
</dbReference>
<dbReference type="RefSeq" id="NP_001011916.1">
    <property type="nucleotide sequence ID" value="NM_001011916.2"/>
</dbReference>
<dbReference type="SMR" id="Q6AYJ4"/>
<dbReference type="FunCoup" id="Q6AYJ4">
    <property type="interactions" value="145"/>
</dbReference>
<dbReference type="STRING" id="10116.ENSRNOP00000072690"/>
<dbReference type="iPTMnet" id="Q6AYJ4"/>
<dbReference type="PhosphoSitePlus" id="Q6AYJ4"/>
<dbReference type="PaxDb" id="10116-ENSRNOP00000026430"/>
<dbReference type="Ensembl" id="ENSRNOT00000026430.6">
    <property type="protein sequence ID" value="ENSRNOP00000026430.4"/>
    <property type="gene ID" value="ENSRNOG00000019503.6"/>
</dbReference>
<dbReference type="GeneID" id="290227"/>
<dbReference type="KEGG" id="rno:290227"/>
<dbReference type="UCSC" id="RGD:1309376">
    <property type="organism name" value="rat"/>
</dbReference>
<dbReference type="AGR" id="RGD:1309376"/>
<dbReference type="CTD" id="9985"/>
<dbReference type="RGD" id="1309376">
    <property type="gene designation" value="Rec8"/>
</dbReference>
<dbReference type="eggNOG" id="KOG1213">
    <property type="taxonomic scope" value="Eukaryota"/>
</dbReference>
<dbReference type="GeneTree" id="ENSGT00390000011379"/>
<dbReference type="HOGENOM" id="CLU_036680_0_0_1"/>
<dbReference type="InParanoid" id="Q6AYJ4"/>
<dbReference type="OMA" id="RVYFQQC"/>
<dbReference type="OrthoDB" id="10071381at2759"/>
<dbReference type="PhylomeDB" id="Q6AYJ4"/>
<dbReference type="TreeFam" id="TF338144"/>
<dbReference type="PRO" id="PR:Q6AYJ4"/>
<dbReference type="Proteomes" id="UP000002494">
    <property type="component" value="Chromosome 15"/>
</dbReference>
<dbReference type="Bgee" id="ENSRNOG00000019503">
    <property type="expression patterns" value="Expressed in testis and 9 other cell types or tissues"/>
</dbReference>
<dbReference type="GO" id="GO:0000793">
    <property type="term" value="C:condensed chromosome"/>
    <property type="evidence" value="ECO:0000266"/>
    <property type="project" value="RGD"/>
</dbReference>
<dbReference type="GO" id="GO:0000779">
    <property type="term" value="C:condensed chromosome, centromeric region"/>
    <property type="evidence" value="ECO:0000266"/>
    <property type="project" value="RGD"/>
</dbReference>
<dbReference type="GO" id="GO:0000794">
    <property type="term" value="C:condensed nuclear chromosome"/>
    <property type="evidence" value="ECO:0000266"/>
    <property type="project" value="RGD"/>
</dbReference>
<dbReference type="GO" id="GO:0000776">
    <property type="term" value="C:kinetochore"/>
    <property type="evidence" value="ECO:0000266"/>
    <property type="project" value="RGD"/>
</dbReference>
<dbReference type="GO" id="GO:0000800">
    <property type="term" value="C:lateral element"/>
    <property type="evidence" value="ECO:0000266"/>
    <property type="project" value="RGD"/>
</dbReference>
<dbReference type="GO" id="GO:0001673">
    <property type="term" value="C:male germ cell nucleus"/>
    <property type="evidence" value="ECO:0000266"/>
    <property type="project" value="RGD"/>
</dbReference>
<dbReference type="GO" id="GO:0030893">
    <property type="term" value="C:meiotic cohesin complex"/>
    <property type="evidence" value="ECO:0000266"/>
    <property type="project" value="RGD"/>
</dbReference>
<dbReference type="GO" id="GO:0005634">
    <property type="term" value="C:nucleus"/>
    <property type="evidence" value="ECO:0000266"/>
    <property type="project" value="RGD"/>
</dbReference>
<dbReference type="GO" id="GO:0000795">
    <property type="term" value="C:synaptonemal complex"/>
    <property type="evidence" value="ECO:0000266"/>
    <property type="project" value="RGD"/>
</dbReference>
<dbReference type="GO" id="GO:0003682">
    <property type="term" value="F:chromatin binding"/>
    <property type="evidence" value="ECO:0000318"/>
    <property type="project" value="GO_Central"/>
</dbReference>
<dbReference type="GO" id="GO:0006302">
    <property type="term" value="P:double-strand break repair"/>
    <property type="evidence" value="ECO:0000318"/>
    <property type="project" value="GO_Central"/>
</dbReference>
<dbReference type="GO" id="GO:0000724">
    <property type="term" value="P:double-strand break repair via homologous recombination"/>
    <property type="evidence" value="ECO:0000266"/>
    <property type="project" value="RGD"/>
</dbReference>
<dbReference type="GO" id="GO:0009566">
    <property type="term" value="P:fertilization"/>
    <property type="evidence" value="ECO:0000266"/>
    <property type="project" value="RGD"/>
</dbReference>
<dbReference type="GO" id="GO:0007129">
    <property type="term" value="P:homologous chromosome pairing at meiosis"/>
    <property type="evidence" value="ECO:0000266"/>
    <property type="project" value="RGD"/>
</dbReference>
<dbReference type="GO" id="GO:0007141">
    <property type="term" value="P:male meiosis I"/>
    <property type="evidence" value="ECO:0000266"/>
    <property type="project" value="RGD"/>
</dbReference>
<dbReference type="GO" id="GO:0051321">
    <property type="term" value="P:meiotic cell cycle"/>
    <property type="evidence" value="ECO:0000266"/>
    <property type="project" value="RGD"/>
</dbReference>
<dbReference type="GO" id="GO:0051177">
    <property type="term" value="P:meiotic sister chromatid cohesion"/>
    <property type="evidence" value="ECO:0000318"/>
    <property type="project" value="GO_Central"/>
</dbReference>
<dbReference type="GO" id="GO:0001556">
    <property type="term" value="P:oocyte maturation"/>
    <property type="evidence" value="ECO:0000266"/>
    <property type="project" value="RGD"/>
</dbReference>
<dbReference type="GO" id="GO:0072520">
    <property type="term" value="P:seminiferous tubule development"/>
    <property type="evidence" value="ECO:0000266"/>
    <property type="project" value="RGD"/>
</dbReference>
<dbReference type="GO" id="GO:0007286">
    <property type="term" value="P:spermatid development"/>
    <property type="evidence" value="ECO:0000266"/>
    <property type="project" value="RGD"/>
</dbReference>
<dbReference type="GO" id="GO:0007130">
    <property type="term" value="P:synaptonemal complex assembly"/>
    <property type="evidence" value="ECO:0000266"/>
    <property type="project" value="RGD"/>
</dbReference>
<dbReference type="CDD" id="cd21794">
    <property type="entry name" value="Rad21_Rec8_M_Rec8"/>
    <property type="match status" value="1"/>
</dbReference>
<dbReference type="InterPro" id="IPR039781">
    <property type="entry name" value="Rad21/Rec8-like"/>
</dbReference>
<dbReference type="InterPro" id="IPR006909">
    <property type="entry name" value="Rad21/Rec8_C_eu"/>
</dbReference>
<dbReference type="InterPro" id="IPR006910">
    <property type="entry name" value="Rad21_Rec8_N"/>
</dbReference>
<dbReference type="InterPro" id="IPR036390">
    <property type="entry name" value="WH_DNA-bd_sf"/>
</dbReference>
<dbReference type="PANTHER" id="PTHR12585:SF27">
    <property type="entry name" value="MEIOTIC RECOMBINATION PROTEIN REC8 HOMOLOG"/>
    <property type="match status" value="1"/>
</dbReference>
<dbReference type="PANTHER" id="PTHR12585">
    <property type="entry name" value="SCC1 / RAD21 FAMILY MEMBER"/>
    <property type="match status" value="1"/>
</dbReference>
<dbReference type="Pfam" id="PF04824">
    <property type="entry name" value="Rad21_Rec8"/>
    <property type="match status" value="1"/>
</dbReference>
<dbReference type="Pfam" id="PF04825">
    <property type="entry name" value="Rad21_Rec8_N"/>
    <property type="match status" value="1"/>
</dbReference>
<dbReference type="SUPFAM" id="SSF46785">
    <property type="entry name" value="Winged helix' DNA-binding domain"/>
    <property type="match status" value="1"/>
</dbReference>
<accession>Q6AYJ4</accession>
<accession>Q6QQR2</accession>
<sequence length="593" mass="67874">MFYYPNVLQRHTGCFATIWLAATRGSRLVKREYLKVNVVKTCEEILNYVLVRVQPPMPGLPRPRFSLYLSAQLQIGVIRVYFQQCQYLVEDIQHILEHLHRAQLRIRIDMEEADLPSLLLPNCLAMMETLEDAPEPFFGTMSVDPTLPSPFDIPQIRHLLEAATPEKIREETLPEATPEPRKPDRTLAMVQSPEVITLQEAEPIRMLRIEGEQDLPEISRGDLDLLIAEEDDAILLEERQRGRLLRQRRASPPLDESKEEPRALEGDGLVSSLSPPAPAQVEGIREPLPDQAFPPEVQKMPGWEPGVLLTEVTPPQELRLPAPPSIEKRPPSPQRPPRRRRRGRQLLFWDKETQISREKFEEQLQTGAHCCEYPVVQPPKRKLMSPAELFRTPTLSGWLSPELLALWTHCAQVPPRMLRQRPQLETEETVEEERVADKEERRKTEALSEIEVLREAQEPSGPLMLSSELSLEVAEEEKSRTSFIPPEERWAWIEERQPEPPALPMLPELPEVPMEMPPGPELLSSEAVLRAVALELQANREPDFSSLVPPLSSRKLASRVFYLLLVLSAQKILLVDQQKPYGRLLIRLGPKFP</sequence>
<organism>
    <name type="scientific">Rattus norvegicus</name>
    <name type="common">Rat</name>
    <dbReference type="NCBI Taxonomy" id="10116"/>
    <lineage>
        <taxon>Eukaryota</taxon>
        <taxon>Metazoa</taxon>
        <taxon>Chordata</taxon>
        <taxon>Craniata</taxon>
        <taxon>Vertebrata</taxon>
        <taxon>Euteleostomi</taxon>
        <taxon>Mammalia</taxon>
        <taxon>Eutheria</taxon>
        <taxon>Euarchontoglires</taxon>
        <taxon>Glires</taxon>
        <taxon>Rodentia</taxon>
        <taxon>Myomorpha</taxon>
        <taxon>Muroidea</taxon>
        <taxon>Muridae</taxon>
        <taxon>Murinae</taxon>
        <taxon>Rattus</taxon>
    </lineage>
</organism>
<proteinExistence type="evidence at protein level"/>
<comment type="function">
    <text evidence="2">Required during meiosis for separation of sister chromatids and homologous chromosomes. Proteolytic cleavage of REC8 on chromosome arms by separin during anaphase I allows for homologous chromosome separation in meiosis I and cleavage of REC8 on centromeres during anaphase II allows for sister chromatid separation in meiosis II (By similarity).</text>
</comment>
<comment type="subunit">
    <text evidence="1 2 5">Interacts (phosphorylated and unphosphorylated form) with SMC3. Interacts with SYCP3. Interacts (phosphorylated and unphosphorylated form) with SMC1B. Does not interact with SMC1A (By similarity). Interacts with RAD51. Forms a complex with EWSR1, PRDM9, SYCP3 and SYCP1; complex formation is dependent of phosphorylated form of REC8 and requires PRDM9 bound to hotspot DNA; EWSR1 joins PRDM9 with the chromosomal axis through REC8 (By similarity).</text>
</comment>
<comment type="subcellular location">
    <subcellularLocation>
        <location evidence="5">Nucleus</location>
    </subcellularLocation>
    <subcellularLocation>
        <location evidence="5">Chromosome</location>
    </subcellularLocation>
    <subcellularLocation>
        <location evidence="5">Chromosome</location>
        <location evidence="5">Centromere</location>
    </subcellularLocation>
    <text evidence="5">In meiotic chromosomes, localized along axial elements in prophase from the leptotene to diplotene stages. At later prophase stages, diakinesis and metaphase I, localized along interstitial axes of chromosomes including both centromere and arm regions. No longer detected in arm regions in anaphase I but persists on centromere regions until metaphase II.</text>
</comment>
<comment type="PTM">
    <text evidence="5">Phosphorylated.</text>
</comment>
<comment type="similarity">
    <text evidence="3">Belongs to the rad21 family.</text>
</comment>
<feature type="chain" id="PRO_0000308168" description="Meiotic recombination protein REC8 homolog">
    <location>
        <begin position="1"/>
        <end position="593"/>
    </location>
</feature>
<feature type="region of interest" description="Disordered" evidence="4">
    <location>
        <begin position="247"/>
        <end position="282"/>
    </location>
</feature>
<feature type="region of interest" description="Disordered" evidence="4">
    <location>
        <begin position="317"/>
        <end position="344"/>
    </location>
</feature>
<feature type="region of interest" description="Disordered" evidence="4">
    <location>
        <begin position="422"/>
        <end position="444"/>
    </location>
</feature>
<feature type="compositionally biased region" description="Basic and acidic residues" evidence="4">
    <location>
        <begin position="255"/>
        <end position="265"/>
    </location>
</feature>
<feature type="compositionally biased region" description="Basic and acidic residues" evidence="4">
    <location>
        <begin position="432"/>
        <end position="444"/>
    </location>
</feature>
<feature type="modified residue" description="Phosphoserine" evidence="2">
    <location>
        <position position="149"/>
    </location>
</feature>
<feature type="modified residue" description="Phosphothreonine" evidence="9">
    <location>
        <position position="164"/>
    </location>
</feature>
<feature type="modified residue" description="Phosphoserine" evidence="9">
    <location>
        <position position="192"/>
    </location>
</feature>
<feature type="sequence conflict" description="In Ref. 1; AAS20426." evidence="6" ref="1">
    <location>
        <begin position="435"/>
        <end position="441"/>
    </location>
</feature>
<feature type="sequence conflict" description="In Ref. 1; AAS20426." evidence="6" ref="1">
    <original>W</original>
    <variation>WW</variation>
    <location>
        <position position="490"/>
    </location>
</feature>
<feature type="sequence conflict" description="In Ref. 1; AAS20426." evidence="6" ref="1">
    <location>
        <position position="523"/>
    </location>
</feature>
<gene>
    <name evidence="2" type="primary">Rec8</name>
    <name evidence="7" type="synonym">Rec8L1</name>
</gene>